<gene>
    <name evidence="1" type="primary">rplS</name>
    <name type="ordered locus">Abu_2025</name>
</gene>
<feature type="chain" id="PRO_1000060799" description="Large ribosomal subunit protein bL19">
    <location>
        <begin position="1"/>
        <end position="118"/>
    </location>
</feature>
<proteinExistence type="inferred from homology"/>
<name>RL19_ALIB4</name>
<comment type="function">
    <text evidence="1">This protein is located at the 30S-50S ribosomal subunit interface and may play a role in the structure and function of the aminoacyl-tRNA binding site.</text>
</comment>
<comment type="similarity">
    <text evidence="1">Belongs to the bacterial ribosomal protein bL19 family.</text>
</comment>
<organism>
    <name type="scientific">Aliarcobacter butzleri (strain RM4018)</name>
    <name type="common">Arcobacter butzleri</name>
    <dbReference type="NCBI Taxonomy" id="367737"/>
    <lineage>
        <taxon>Bacteria</taxon>
        <taxon>Pseudomonadati</taxon>
        <taxon>Campylobacterota</taxon>
        <taxon>Epsilonproteobacteria</taxon>
        <taxon>Campylobacterales</taxon>
        <taxon>Arcobacteraceae</taxon>
        <taxon>Aliarcobacter</taxon>
    </lineage>
</organism>
<protein>
    <recommendedName>
        <fullName evidence="1">Large ribosomal subunit protein bL19</fullName>
    </recommendedName>
    <alternativeName>
        <fullName evidence="2">50S ribosomal protein L19</fullName>
    </alternativeName>
</protein>
<sequence length="118" mass="13381">MKNRYIASFEAAQIAEKQIPQFRSGDTVRIGVEIKEGEKKRIQTFEGIIIGRSGNGVDATFTIRKLGANSIGVERIFPLYSESLKSFEVIRRGRVRRAKLNFLRGLKGKAARIKELKR</sequence>
<keyword id="KW-1185">Reference proteome</keyword>
<keyword id="KW-0687">Ribonucleoprotein</keyword>
<keyword id="KW-0689">Ribosomal protein</keyword>
<accession>A8EWB9</accession>
<evidence type="ECO:0000255" key="1">
    <source>
        <dbReference type="HAMAP-Rule" id="MF_00402"/>
    </source>
</evidence>
<evidence type="ECO:0000305" key="2"/>
<reference key="1">
    <citation type="journal article" date="2007" name="PLoS ONE">
        <title>The complete genome sequence and analysis of the Epsilonproteobacterium Arcobacter butzleri.</title>
        <authorList>
            <person name="Miller W.G."/>
            <person name="Parker C.T."/>
            <person name="Rubenfield M."/>
            <person name="Mendz G.L."/>
            <person name="Woesten M.M.S.M."/>
            <person name="Ussery D.W."/>
            <person name="Stolz J.F."/>
            <person name="Binnewies T.T."/>
            <person name="Hallin P.F."/>
            <person name="Wang G."/>
            <person name="Malek J.A."/>
            <person name="Rogosin A."/>
            <person name="Stanker L.H."/>
            <person name="Mandrell R.E."/>
        </authorList>
    </citation>
    <scope>NUCLEOTIDE SEQUENCE [LARGE SCALE GENOMIC DNA]</scope>
    <source>
        <strain>RM4018</strain>
    </source>
</reference>
<dbReference type="EMBL" id="CP000361">
    <property type="protein sequence ID" value="ABV68242.1"/>
    <property type="molecule type" value="Genomic_DNA"/>
</dbReference>
<dbReference type="RefSeq" id="WP_012147912.1">
    <property type="nucleotide sequence ID" value="NC_009850.1"/>
</dbReference>
<dbReference type="SMR" id="A8EWB9"/>
<dbReference type="STRING" id="367737.Abu_2025"/>
<dbReference type="GeneID" id="24304894"/>
<dbReference type="KEGG" id="abu:Abu_2025"/>
<dbReference type="eggNOG" id="COG0335">
    <property type="taxonomic scope" value="Bacteria"/>
</dbReference>
<dbReference type="HOGENOM" id="CLU_103507_2_1_7"/>
<dbReference type="Proteomes" id="UP000001136">
    <property type="component" value="Chromosome"/>
</dbReference>
<dbReference type="GO" id="GO:0022625">
    <property type="term" value="C:cytosolic large ribosomal subunit"/>
    <property type="evidence" value="ECO:0007669"/>
    <property type="project" value="TreeGrafter"/>
</dbReference>
<dbReference type="GO" id="GO:0003735">
    <property type="term" value="F:structural constituent of ribosome"/>
    <property type="evidence" value="ECO:0007669"/>
    <property type="project" value="InterPro"/>
</dbReference>
<dbReference type="GO" id="GO:0006412">
    <property type="term" value="P:translation"/>
    <property type="evidence" value="ECO:0007669"/>
    <property type="project" value="UniProtKB-UniRule"/>
</dbReference>
<dbReference type="Gene3D" id="2.30.30.790">
    <property type="match status" value="1"/>
</dbReference>
<dbReference type="HAMAP" id="MF_00402">
    <property type="entry name" value="Ribosomal_bL19"/>
    <property type="match status" value="1"/>
</dbReference>
<dbReference type="InterPro" id="IPR001857">
    <property type="entry name" value="Ribosomal_bL19"/>
</dbReference>
<dbReference type="InterPro" id="IPR038657">
    <property type="entry name" value="Ribosomal_bL19_sf"/>
</dbReference>
<dbReference type="InterPro" id="IPR008991">
    <property type="entry name" value="Translation_prot_SH3-like_sf"/>
</dbReference>
<dbReference type="NCBIfam" id="TIGR01024">
    <property type="entry name" value="rplS_bact"/>
    <property type="match status" value="1"/>
</dbReference>
<dbReference type="PANTHER" id="PTHR15680:SF9">
    <property type="entry name" value="LARGE RIBOSOMAL SUBUNIT PROTEIN BL19M"/>
    <property type="match status" value="1"/>
</dbReference>
<dbReference type="PANTHER" id="PTHR15680">
    <property type="entry name" value="RIBOSOMAL PROTEIN L19"/>
    <property type="match status" value="1"/>
</dbReference>
<dbReference type="Pfam" id="PF01245">
    <property type="entry name" value="Ribosomal_L19"/>
    <property type="match status" value="1"/>
</dbReference>
<dbReference type="PIRSF" id="PIRSF002191">
    <property type="entry name" value="Ribosomal_L19"/>
    <property type="match status" value="1"/>
</dbReference>
<dbReference type="PRINTS" id="PR00061">
    <property type="entry name" value="RIBOSOMALL19"/>
</dbReference>
<dbReference type="SUPFAM" id="SSF50104">
    <property type="entry name" value="Translation proteins SH3-like domain"/>
    <property type="match status" value="1"/>
</dbReference>